<gene>
    <name type="ordered locus">PputGB1_4524</name>
</gene>
<organism>
    <name type="scientific">Pseudomonas putida (strain GB-1)</name>
    <dbReference type="NCBI Taxonomy" id="76869"/>
    <lineage>
        <taxon>Bacteria</taxon>
        <taxon>Pseudomonadati</taxon>
        <taxon>Pseudomonadota</taxon>
        <taxon>Gammaproteobacteria</taxon>
        <taxon>Pseudomonadales</taxon>
        <taxon>Pseudomonadaceae</taxon>
        <taxon>Pseudomonas</taxon>
    </lineage>
</organism>
<feature type="chain" id="PRO_0000336233" description="UPF0102 protein PputGB1_4524">
    <location>
        <begin position="1"/>
        <end position="123"/>
    </location>
</feature>
<accession>B0KFT8</accession>
<reference key="1">
    <citation type="submission" date="2008-01" db="EMBL/GenBank/DDBJ databases">
        <title>Complete sequence of Pseudomonas putida GB-1.</title>
        <authorList>
            <consortium name="US DOE Joint Genome Institute"/>
            <person name="Copeland A."/>
            <person name="Lucas S."/>
            <person name="Lapidus A."/>
            <person name="Barry K."/>
            <person name="Glavina del Rio T."/>
            <person name="Dalin E."/>
            <person name="Tice H."/>
            <person name="Pitluck S."/>
            <person name="Bruce D."/>
            <person name="Goodwin L."/>
            <person name="Chertkov O."/>
            <person name="Brettin T."/>
            <person name="Detter J.C."/>
            <person name="Han C."/>
            <person name="Kuske C.R."/>
            <person name="Schmutz J."/>
            <person name="Larimer F."/>
            <person name="Land M."/>
            <person name="Hauser L."/>
            <person name="Kyrpides N."/>
            <person name="Kim E."/>
            <person name="McCarthy J.K."/>
            <person name="Richardson P."/>
        </authorList>
    </citation>
    <scope>NUCLEOTIDE SEQUENCE [LARGE SCALE GENOMIC DNA]</scope>
    <source>
        <strain>GB-1</strain>
    </source>
</reference>
<comment type="similarity">
    <text evidence="1">Belongs to the UPF0102 family.</text>
</comment>
<name>Y4524_PSEPG</name>
<protein>
    <recommendedName>
        <fullName evidence="1">UPF0102 protein PputGB1_4524</fullName>
    </recommendedName>
</protein>
<dbReference type="EMBL" id="CP000926">
    <property type="protein sequence ID" value="ABZ00411.1"/>
    <property type="molecule type" value="Genomic_DNA"/>
</dbReference>
<dbReference type="RefSeq" id="WP_012274069.1">
    <property type="nucleotide sequence ID" value="NC_010322.1"/>
</dbReference>
<dbReference type="SMR" id="B0KFT8"/>
<dbReference type="KEGG" id="ppg:PputGB1_4524"/>
<dbReference type="eggNOG" id="COG0792">
    <property type="taxonomic scope" value="Bacteria"/>
</dbReference>
<dbReference type="HOGENOM" id="CLU_115353_1_0_6"/>
<dbReference type="Proteomes" id="UP000002157">
    <property type="component" value="Chromosome"/>
</dbReference>
<dbReference type="GO" id="GO:0003676">
    <property type="term" value="F:nucleic acid binding"/>
    <property type="evidence" value="ECO:0007669"/>
    <property type="project" value="InterPro"/>
</dbReference>
<dbReference type="CDD" id="cd20736">
    <property type="entry name" value="PoNe_Nuclease"/>
    <property type="match status" value="1"/>
</dbReference>
<dbReference type="Gene3D" id="3.40.1350.10">
    <property type="match status" value="1"/>
</dbReference>
<dbReference type="HAMAP" id="MF_00048">
    <property type="entry name" value="UPF0102"/>
    <property type="match status" value="1"/>
</dbReference>
<dbReference type="InterPro" id="IPR011335">
    <property type="entry name" value="Restrct_endonuc-II-like"/>
</dbReference>
<dbReference type="InterPro" id="IPR011856">
    <property type="entry name" value="tRNA_endonuc-like_dom_sf"/>
</dbReference>
<dbReference type="InterPro" id="IPR003509">
    <property type="entry name" value="UPF0102_YraN-like"/>
</dbReference>
<dbReference type="NCBIfam" id="NF009150">
    <property type="entry name" value="PRK12497.1-3"/>
    <property type="match status" value="1"/>
</dbReference>
<dbReference type="NCBIfam" id="TIGR00252">
    <property type="entry name" value="YraN family protein"/>
    <property type="match status" value="1"/>
</dbReference>
<dbReference type="PANTHER" id="PTHR34039">
    <property type="entry name" value="UPF0102 PROTEIN YRAN"/>
    <property type="match status" value="1"/>
</dbReference>
<dbReference type="PANTHER" id="PTHR34039:SF1">
    <property type="entry name" value="UPF0102 PROTEIN YRAN"/>
    <property type="match status" value="1"/>
</dbReference>
<dbReference type="Pfam" id="PF02021">
    <property type="entry name" value="UPF0102"/>
    <property type="match status" value="1"/>
</dbReference>
<dbReference type="SUPFAM" id="SSF52980">
    <property type="entry name" value="Restriction endonuclease-like"/>
    <property type="match status" value="1"/>
</dbReference>
<sequence>MPAASPTRAGQAAETQALEYLQGQGLQLLARNWRCKGGELDLVMLDADTVVFVEVRYRLHAGFGGALDSIDGRKQKRLVLAASLFLQKEPHWGNHPCRFDVVALQGSHHAGRPLQWLKNAFEC</sequence>
<evidence type="ECO:0000255" key="1">
    <source>
        <dbReference type="HAMAP-Rule" id="MF_00048"/>
    </source>
</evidence>
<proteinExistence type="inferred from homology"/>